<proteinExistence type="inferred from homology"/>
<organism>
    <name type="scientific">Rickettsia prowazekii (strain Madrid E)</name>
    <dbReference type="NCBI Taxonomy" id="272947"/>
    <lineage>
        <taxon>Bacteria</taxon>
        <taxon>Pseudomonadati</taxon>
        <taxon>Pseudomonadota</taxon>
        <taxon>Alphaproteobacteria</taxon>
        <taxon>Rickettsiales</taxon>
        <taxon>Rickettsiaceae</taxon>
        <taxon>Rickettsieae</taxon>
        <taxon>Rickettsia</taxon>
        <taxon>typhus group</taxon>
    </lineage>
</organism>
<feature type="chain" id="PRO_0000158678" description="Succinate dehydrogenase hydrophobic membrane anchor subunit">
    <location>
        <begin position="1"/>
        <end position="125"/>
    </location>
</feature>
<feature type="topological domain" description="Cytoplasmic" evidence="1">
    <location>
        <begin position="1"/>
        <end position="24"/>
    </location>
</feature>
<feature type="transmembrane region" description="Helical" evidence="1">
    <location>
        <begin position="25"/>
        <end position="45"/>
    </location>
</feature>
<feature type="topological domain" description="Periplasmic" evidence="1">
    <location>
        <begin position="46"/>
        <end position="67"/>
    </location>
</feature>
<feature type="transmembrane region" description="Helical" evidence="1">
    <location>
        <begin position="68"/>
        <end position="89"/>
    </location>
</feature>
<feature type="topological domain" description="Cytoplasmic" evidence="1">
    <location>
        <begin position="90"/>
        <end position="99"/>
    </location>
</feature>
<feature type="transmembrane region" description="Helical" evidence="1">
    <location>
        <begin position="100"/>
        <end position="123"/>
    </location>
</feature>
<feature type="binding site" description="axial binding residue" evidence="1">
    <location>
        <position position="80"/>
    </location>
    <ligand>
        <name>heme</name>
        <dbReference type="ChEBI" id="CHEBI:30413"/>
        <note>ligand shared with second transmembrane subunit</note>
    </ligand>
    <ligandPart>
        <name>Fe</name>
        <dbReference type="ChEBI" id="CHEBI:18248"/>
    </ligandPart>
</feature>
<feature type="binding site" evidence="1">
    <location>
        <position position="92"/>
    </location>
    <ligand>
        <name>a ubiquinone</name>
        <dbReference type="ChEBI" id="CHEBI:16389"/>
    </ligand>
</feature>
<protein>
    <recommendedName>
        <fullName>Succinate dehydrogenase hydrophobic membrane anchor subunit</fullName>
    </recommendedName>
</protein>
<comment type="function">
    <text evidence="1">Membrane-anchoring subunit of succinate dehydrogenase (SDH).</text>
</comment>
<comment type="cofactor">
    <cofactor evidence="1">
        <name>heme</name>
        <dbReference type="ChEBI" id="CHEBI:30413"/>
    </cofactor>
    <text evidence="1">The heme is bound between the two transmembrane subunits.</text>
</comment>
<comment type="pathway">
    <text>Carbohydrate metabolism; tricarboxylic acid cycle.</text>
</comment>
<comment type="subunit">
    <text evidence="1">Part of an enzyme complex containing four subunits: a flavoprotein, an iron-sulfur protein, plus two membrane-anchoring proteins, SdhC and SdhD.</text>
</comment>
<comment type="subcellular location">
    <subcellularLocation>
        <location>Cell inner membrane</location>
        <topology>Multi-pass membrane protein</topology>
    </subcellularLocation>
</comment>
<sequence>MIYDFKAEIIKAKNSSFSKSGSHHWLLQRVTGVILALCSFWLIYFMFTNKNNDINIIMWEFKKPFNIVILLITVTISLYHSVLGMRVVIEDYINCHKLRNTLIIIVKLFCILTIVSFVVAIFYSG</sequence>
<reference key="1">
    <citation type="submission" date="1993-10" db="EMBL/GenBank/DDBJ databases">
        <authorList>
            <person name="Wood D.O."/>
        </authorList>
    </citation>
    <scope>NUCLEOTIDE SEQUENCE [GENOMIC DNA]</scope>
    <source>
        <strain>Madrid E</strain>
    </source>
</reference>
<reference key="2">
    <citation type="journal article" date="1998" name="Nature">
        <title>The genome sequence of Rickettsia prowazekii and the origin of mitochondria.</title>
        <authorList>
            <person name="Andersson S.G.E."/>
            <person name="Zomorodipour A."/>
            <person name="Andersson J.O."/>
            <person name="Sicheritz-Ponten T."/>
            <person name="Alsmark U.C.M."/>
            <person name="Podowski R.M."/>
            <person name="Naeslund A.K."/>
            <person name="Eriksson A.-S."/>
            <person name="Winkler H.H."/>
            <person name="Kurland C.G."/>
        </authorList>
    </citation>
    <scope>NUCLEOTIDE SEQUENCE [LARGE SCALE GENOMIC DNA]</scope>
    <source>
        <strain>Madrid E</strain>
    </source>
</reference>
<dbReference type="EMBL" id="U02603">
    <property type="protein sequence ID" value="AAA18326.1"/>
    <property type="molecule type" value="Unassigned_DNA"/>
</dbReference>
<dbReference type="EMBL" id="AJ235270">
    <property type="protein sequence ID" value="CAA14596.1"/>
    <property type="molecule type" value="Genomic_DNA"/>
</dbReference>
<dbReference type="PIR" id="E71722">
    <property type="entry name" value="E71722"/>
</dbReference>
<dbReference type="RefSeq" id="NP_220519.1">
    <property type="nucleotide sequence ID" value="NC_000963.1"/>
</dbReference>
<dbReference type="RefSeq" id="WP_004597167.1">
    <property type="nucleotide sequence ID" value="NC_000963.1"/>
</dbReference>
<dbReference type="SMR" id="P41086"/>
<dbReference type="STRING" id="272947.gene:17555210"/>
<dbReference type="EnsemblBacteria" id="CAA14596">
    <property type="protein sequence ID" value="CAA14596"/>
    <property type="gene ID" value="CAA14596"/>
</dbReference>
<dbReference type="GeneID" id="57569255"/>
<dbReference type="KEGG" id="rpr:RP127"/>
<dbReference type="PATRIC" id="fig|272947.5.peg.129"/>
<dbReference type="eggNOG" id="COG2142">
    <property type="taxonomic scope" value="Bacteria"/>
</dbReference>
<dbReference type="HOGENOM" id="CLU_151315_0_2_5"/>
<dbReference type="OrthoDB" id="9809280at2"/>
<dbReference type="UniPathway" id="UPA00223"/>
<dbReference type="Proteomes" id="UP000002480">
    <property type="component" value="Chromosome"/>
</dbReference>
<dbReference type="GO" id="GO:0005886">
    <property type="term" value="C:plasma membrane"/>
    <property type="evidence" value="ECO:0007669"/>
    <property type="project" value="UniProtKB-SubCell"/>
</dbReference>
<dbReference type="GO" id="GO:0009055">
    <property type="term" value="F:electron transfer activity"/>
    <property type="evidence" value="ECO:0007669"/>
    <property type="project" value="TreeGrafter"/>
</dbReference>
<dbReference type="GO" id="GO:0020037">
    <property type="term" value="F:heme binding"/>
    <property type="evidence" value="ECO:0007669"/>
    <property type="project" value="InterPro"/>
</dbReference>
<dbReference type="GO" id="GO:0046872">
    <property type="term" value="F:metal ion binding"/>
    <property type="evidence" value="ECO:0007669"/>
    <property type="project" value="UniProtKB-KW"/>
</dbReference>
<dbReference type="GO" id="GO:0017004">
    <property type="term" value="P:cytochrome complex assembly"/>
    <property type="evidence" value="ECO:0007669"/>
    <property type="project" value="TreeGrafter"/>
</dbReference>
<dbReference type="GO" id="GO:0006099">
    <property type="term" value="P:tricarboxylic acid cycle"/>
    <property type="evidence" value="ECO:0007669"/>
    <property type="project" value="UniProtKB-UniPathway"/>
</dbReference>
<dbReference type="CDD" id="cd03495">
    <property type="entry name" value="SQR_TypeC_SdhD_like"/>
    <property type="match status" value="1"/>
</dbReference>
<dbReference type="Gene3D" id="1.20.1300.10">
    <property type="entry name" value="Fumarate reductase/succinate dehydrogenase, transmembrane subunit"/>
    <property type="match status" value="1"/>
</dbReference>
<dbReference type="InterPro" id="IPR034804">
    <property type="entry name" value="SQR/QFR_C/D"/>
</dbReference>
<dbReference type="InterPro" id="IPR014312">
    <property type="entry name" value="Succ_DH_anchor"/>
</dbReference>
<dbReference type="InterPro" id="IPR000701">
    <property type="entry name" value="SuccDH_FuR_B_TM-su"/>
</dbReference>
<dbReference type="NCBIfam" id="TIGR02968">
    <property type="entry name" value="succ_dehyd_anc"/>
    <property type="match status" value="1"/>
</dbReference>
<dbReference type="PANTHER" id="PTHR38689">
    <property type="entry name" value="SUCCINATE DEHYDROGENASE HYDROPHOBIC MEMBRANE ANCHOR SUBUNIT"/>
    <property type="match status" value="1"/>
</dbReference>
<dbReference type="PANTHER" id="PTHR38689:SF1">
    <property type="entry name" value="SUCCINATE DEHYDROGENASE HYDROPHOBIC MEMBRANE ANCHOR SUBUNIT"/>
    <property type="match status" value="1"/>
</dbReference>
<dbReference type="Pfam" id="PF01127">
    <property type="entry name" value="Sdh_cyt"/>
    <property type="match status" value="1"/>
</dbReference>
<dbReference type="SUPFAM" id="SSF81343">
    <property type="entry name" value="Fumarate reductase respiratory complex transmembrane subunits"/>
    <property type="match status" value="1"/>
</dbReference>
<accession>P41086</accession>
<gene>
    <name type="primary">sdhD</name>
    <name type="ordered locus">RP127</name>
</gene>
<evidence type="ECO:0000250" key="1"/>
<keyword id="KW-0997">Cell inner membrane</keyword>
<keyword id="KW-1003">Cell membrane</keyword>
<keyword id="KW-0249">Electron transport</keyword>
<keyword id="KW-0349">Heme</keyword>
<keyword id="KW-0408">Iron</keyword>
<keyword id="KW-0472">Membrane</keyword>
<keyword id="KW-0479">Metal-binding</keyword>
<keyword id="KW-1185">Reference proteome</keyword>
<keyword id="KW-0812">Transmembrane</keyword>
<keyword id="KW-1133">Transmembrane helix</keyword>
<keyword id="KW-0813">Transport</keyword>
<keyword id="KW-0816">Tricarboxylic acid cycle</keyword>
<name>DHSD_RICPR</name>